<reference key="1">
    <citation type="journal article" date="1994" name="J. Clin. Microbiol.">
        <title>A chromosomal Borrelia burgdorferi gene encodes a 22-kilodalton lipoprotein, P22, that is serologically recognized in Lyme disease.</title>
        <authorList>
            <person name="Lam T."/>
            <person name="Nguyen T."/>
            <person name="Fikrig E."/>
            <person name="Flavell R."/>
        </authorList>
    </citation>
    <scope>NUCLEOTIDE SEQUENCE [GENOMIC DNA]</scope>
    <source>
        <strain>N40</strain>
    </source>
</reference>
<reference key="2">
    <citation type="journal article" date="2011" name="J. Bacteriol.">
        <title>Whole-genome sequences of thirteen isolates of Borrelia burgdorferi.</title>
        <authorList>
            <person name="Schutzer S.E."/>
            <person name="Fraser-Liggett C.M."/>
            <person name="Casjens S.R."/>
            <person name="Qiu W.G."/>
            <person name="Dunn J.J."/>
            <person name="Mongodin E.F."/>
            <person name="Luft B.J."/>
        </authorList>
    </citation>
    <scope>NUCLEOTIDE SEQUENCE [LARGE SCALE GENOMIC DNA]</scope>
    <source>
        <strain>N40</strain>
    </source>
</reference>
<sequence>MYKNGFFKNYLSLLLIFLVIACTSKDSSNEYVEEQEAENSSKPDDSKIDEHTIGHVFHAMGVVHSKKDRKSLGENIKVFYFSEEDGHFQTIPSKENAKLIVYFYDNVYAGEAPISISGKEAFIFVGITSDFKKIINSNLHGAKSDLIGTFKDLNIKNSKLEITVDENNSDAKTFLESVNYIIDGVEKISPMLTN</sequence>
<accession>E4QEX4</accession>
<accession>P0C924</accession>
<accession>Q05903</accession>
<accession>Q45008</accession>
<gene>
    <name type="primary">p22</name>
    <name type="ordered locus">BbuN40_0365</name>
</gene>
<keyword id="KW-0998">Cell outer membrane</keyword>
<keyword id="KW-0449">Lipoprotein</keyword>
<keyword id="KW-0472">Membrane</keyword>
<keyword id="KW-0564">Palmitate</keyword>
<keyword id="KW-0732">Signal</keyword>
<proteinExistence type="predicted"/>
<organism>
    <name type="scientific">Borreliella burgdorferi (strain N40)</name>
    <name type="common">Borrelia burgdorferi</name>
    <dbReference type="NCBI Taxonomy" id="521007"/>
    <lineage>
        <taxon>Bacteria</taxon>
        <taxon>Pseudomonadati</taxon>
        <taxon>Spirochaetota</taxon>
        <taxon>Spirochaetia</taxon>
        <taxon>Spirochaetales</taxon>
        <taxon>Borreliaceae</taxon>
        <taxon>Borreliella</taxon>
    </lineage>
</organism>
<protein>
    <recommendedName>
        <fullName>Outer surface 22 kDa lipoprotein</fullName>
    </recommendedName>
    <alternativeName>
        <fullName>Antigen IPLA7</fullName>
    </alternativeName>
</protein>
<comment type="subcellular location">
    <subcellularLocation>
        <location>Cell outer membrane</location>
        <topology>Lipid-anchor</topology>
    </subcellularLocation>
</comment>
<dbReference type="EMBL" id="L22530">
    <property type="protein sequence ID" value="AAC36908.1"/>
    <property type="molecule type" value="Genomic_DNA"/>
</dbReference>
<dbReference type="EMBL" id="CP002228">
    <property type="protein sequence ID" value="ADQ29796.1"/>
    <property type="molecule type" value="Genomic_DNA"/>
</dbReference>
<dbReference type="PIR" id="D70145">
    <property type="entry name" value="D70145"/>
</dbReference>
<dbReference type="RefSeq" id="WP_002660648.1">
    <property type="nucleotide sequence ID" value="NC_017418.1"/>
</dbReference>
<dbReference type="SMR" id="E4QEX4"/>
<dbReference type="KEGG" id="bbn:BbuN40_0365"/>
<dbReference type="PATRIC" id="fig|521007.3.peg.408"/>
<dbReference type="HOGENOM" id="CLU_1400113_0_0_12"/>
<dbReference type="GO" id="GO:0009279">
    <property type="term" value="C:cell outer membrane"/>
    <property type="evidence" value="ECO:0007669"/>
    <property type="project" value="UniProtKB-SubCell"/>
</dbReference>
<dbReference type="PROSITE" id="PS51257">
    <property type="entry name" value="PROKAR_LIPOPROTEIN"/>
    <property type="match status" value="1"/>
</dbReference>
<evidence type="ECO:0000305" key="1"/>
<feature type="signal peptide" evidence="1">
    <location>
        <begin position="1"/>
        <end position="21"/>
    </location>
</feature>
<feature type="chain" id="PRO_0000406314" description="Outer surface 22 kDa lipoprotein">
    <location>
        <begin position="22"/>
        <end position="194"/>
    </location>
</feature>
<feature type="lipid moiety-binding region" description="N-palmitoyl cysteine" evidence="1">
    <location>
        <position position="22"/>
    </location>
</feature>
<feature type="lipid moiety-binding region" description="S-diacylglycerol cysteine" evidence="1">
    <location>
        <position position="22"/>
    </location>
</feature>
<name>P22_BORBN</name>